<keyword id="KW-1003">Cell membrane</keyword>
<keyword id="KW-0169">Cobalamin biosynthesis</keyword>
<keyword id="KW-0460">Magnesium</keyword>
<keyword id="KW-0472">Membrane</keyword>
<keyword id="KW-0808">Transferase</keyword>
<keyword id="KW-0812">Transmembrane</keyword>
<keyword id="KW-1133">Transmembrane helix</keyword>
<protein>
    <recommendedName>
        <fullName evidence="1">Adenosylcobinamide-GDP ribazoletransferase</fullName>
        <ecNumber evidence="1">2.7.8.26</ecNumber>
    </recommendedName>
    <alternativeName>
        <fullName evidence="1">Cobalamin synthase</fullName>
    </alternativeName>
    <alternativeName>
        <fullName evidence="1">Cobalamin-5'-phosphate synthase</fullName>
    </alternativeName>
</protein>
<reference key="1">
    <citation type="journal article" date="2004" name="Proc. Natl. Acad. Sci. U.S.A.">
        <title>Genome sequence of Picrophilus torridus and its implications for life around pH 0.</title>
        <authorList>
            <person name="Fuetterer O."/>
            <person name="Angelov A."/>
            <person name="Liesegang H."/>
            <person name="Gottschalk G."/>
            <person name="Schleper C."/>
            <person name="Schepers B."/>
            <person name="Dock C."/>
            <person name="Antranikian G."/>
            <person name="Liebl W."/>
        </authorList>
    </citation>
    <scope>NUCLEOTIDE SEQUENCE [LARGE SCALE GENOMIC DNA]</scope>
    <source>
        <strain>ATCC 700027 / DSM 9790 / JCM 10055 / NBRC 100828 / KAW 2/3</strain>
    </source>
</reference>
<dbReference type="EC" id="2.7.8.26" evidence="1"/>
<dbReference type="EMBL" id="AE017261">
    <property type="protein sequence ID" value="AAT43278.1"/>
    <property type="molecule type" value="Genomic_DNA"/>
</dbReference>
<dbReference type="RefSeq" id="WP_011177494.1">
    <property type="nucleotide sequence ID" value="NC_005877.1"/>
</dbReference>
<dbReference type="FunCoup" id="Q6L174">
    <property type="interactions" value="60"/>
</dbReference>
<dbReference type="STRING" id="263820.PTO0693"/>
<dbReference type="PaxDb" id="263820-PTO0693"/>
<dbReference type="GeneID" id="2845050"/>
<dbReference type="KEGG" id="pto:PTO0693"/>
<dbReference type="eggNOG" id="arCOG04338">
    <property type="taxonomic scope" value="Archaea"/>
</dbReference>
<dbReference type="HOGENOM" id="CLU_057426_2_0_2"/>
<dbReference type="InParanoid" id="Q6L174"/>
<dbReference type="OrthoDB" id="11748at2157"/>
<dbReference type="UniPathway" id="UPA00148">
    <property type="reaction ID" value="UER00238"/>
</dbReference>
<dbReference type="Proteomes" id="UP000000438">
    <property type="component" value="Chromosome"/>
</dbReference>
<dbReference type="GO" id="GO:0005886">
    <property type="term" value="C:plasma membrane"/>
    <property type="evidence" value="ECO:0007669"/>
    <property type="project" value="UniProtKB-SubCell"/>
</dbReference>
<dbReference type="GO" id="GO:0051073">
    <property type="term" value="F:adenosylcobinamide-GDP ribazoletransferase activity"/>
    <property type="evidence" value="ECO:0007669"/>
    <property type="project" value="UniProtKB-UniRule"/>
</dbReference>
<dbReference type="GO" id="GO:0008818">
    <property type="term" value="F:cobalamin 5'-phosphate synthase activity"/>
    <property type="evidence" value="ECO:0007669"/>
    <property type="project" value="UniProtKB-UniRule"/>
</dbReference>
<dbReference type="GO" id="GO:0009236">
    <property type="term" value="P:cobalamin biosynthetic process"/>
    <property type="evidence" value="ECO:0007669"/>
    <property type="project" value="UniProtKB-UniRule"/>
</dbReference>
<dbReference type="HAMAP" id="MF_00719">
    <property type="entry name" value="CobS"/>
    <property type="match status" value="1"/>
</dbReference>
<dbReference type="InterPro" id="IPR003805">
    <property type="entry name" value="CobS"/>
</dbReference>
<dbReference type="NCBIfam" id="TIGR00317">
    <property type="entry name" value="cobS"/>
    <property type="match status" value="1"/>
</dbReference>
<dbReference type="PANTHER" id="PTHR34148">
    <property type="entry name" value="ADENOSYLCOBINAMIDE-GDP RIBAZOLETRANSFERASE"/>
    <property type="match status" value="1"/>
</dbReference>
<dbReference type="PANTHER" id="PTHR34148:SF1">
    <property type="entry name" value="ADENOSYLCOBINAMIDE-GDP RIBAZOLETRANSFERASE"/>
    <property type="match status" value="1"/>
</dbReference>
<dbReference type="Pfam" id="PF02654">
    <property type="entry name" value="CobS"/>
    <property type="match status" value="1"/>
</dbReference>
<name>COBS_PICTO</name>
<accession>Q6L174</accession>
<proteinExistence type="inferred from homology"/>
<gene>
    <name evidence="1" type="primary">cobS</name>
    <name type="ordered locus">PTO0693</name>
</gene>
<organism>
    <name type="scientific">Picrophilus torridus (strain ATCC 700027 / DSM 9790 / JCM 10055 / NBRC 100828 / KAW 2/3)</name>
    <dbReference type="NCBI Taxonomy" id="1122961"/>
    <lineage>
        <taxon>Archaea</taxon>
        <taxon>Methanobacteriati</taxon>
        <taxon>Thermoplasmatota</taxon>
        <taxon>Thermoplasmata</taxon>
        <taxon>Thermoplasmatales</taxon>
        <taxon>Picrophilaceae</taxon>
        <taxon>Picrophilus</taxon>
    </lineage>
</organism>
<evidence type="ECO:0000255" key="1">
    <source>
        <dbReference type="HAMAP-Rule" id="MF_00719"/>
    </source>
</evidence>
<sequence length="241" mass="27136">MQGLKSAISFFTIIPVKADLNKNIVFFFTITGAITGLMAASIFYLTSFINQLLASVASVSFLIIIYGFNHADAVLDLGDTFMVHDPEKKKIIIKDVYHGTGSVVTFFIIYIITISLLSSFNSIQGSIALILSETISRFSMLMSMYKSNSFSGGISEIFISYFDKPFKITFFNFLVIILIFLIFYKYIIFTMFSLISIVISYYFKSHEQKIFNGINGDIIGFTGELSRLISLLLILISFKLI</sequence>
<feature type="chain" id="PRO_0000146914" description="Adenosylcobinamide-GDP ribazoletransferase">
    <location>
        <begin position="1"/>
        <end position="241"/>
    </location>
</feature>
<feature type="transmembrane region" description="Helical" evidence="1">
    <location>
        <begin position="24"/>
        <end position="44"/>
    </location>
</feature>
<feature type="transmembrane region" description="Helical" evidence="1">
    <location>
        <begin position="48"/>
        <end position="68"/>
    </location>
</feature>
<feature type="transmembrane region" description="Helical" evidence="1">
    <location>
        <begin position="103"/>
        <end position="123"/>
    </location>
</feature>
<feature type="transmembrane region" description="Helical" evidence="1">
    <location>
        <begin position="175"/>
        <end position="195"/>
    </location>
</feature>
<feature type="transmembrane region" description="Helical" evidence="1">
    <location>
        <begin position="218"/>
        <end position="238"/>
    </location>
</feature>
<comment type="function">
    <text evidence="1">Joins adenosylcobinamide-GDP and alpha-ribazole to generate adenosylcobalamin (Ado-cobalamin). Also synthesizes adenosylcobalamin 5'-phosphate from adenosylcobinamide-GDP and alpha-ribazole 5'-phosphate.</text>
</comment>
<comment type="catalytic activity">
    <reaction evidence="1">
        <text>alpha-ribazole + adenosylcob(III)inamide-GDP = adenosylcob(III)alamin + GMP + H(+)</text>
        <dbReference type="Rhea" id="RHEA:16049"/>
        <dbReference type="ChEBI" id="CHEBI:10329"/>
        <dbReference type="ChEBI" id="CHEBI:15378"/>
        <dbReference type="ChEBI" id="CHEBI:18408"/>
        <dbReference type="ChEBI" id="CHEBI:58115"/>
        <dbReference type="ChEBI" id="CHEBI:60487"/>
        <dbReference type="EC" id="2.7.8.26"/>
    </reaction>
</comment>
<comment type="catalytic activity">
    <reaction evidence="1">
        <text>alpha-ribazole 5'-phosphate + adenosylcob(III)inamide-GDP = adenosylcob(III)alamin 5'-phosphate + GMP + H(+)</text>
        <dbReference type="Rhea" id="RHEA:23560"/>
        <dbReference type="ChEBI" id="CHEBI:15378"/>
        <dbReference type="ChEBI" id="CHEBI:57918"/>
        <dbReference type="ChEBI" id="CHEBI:58115"/>
        <dbReference type="ChEBI" id="CHEBI:60487"/>
        <dbReference type="ChEBI" id="CHEBI:60493"/>
        <dbReference type="EC" id="2.7.8.26"/>
    </reaction>
</comment>
<comment type="cofactor">
    <cofactor evidence="1">
        <name>Mg(2+)</name>
        <dbReference type="ChEBI" id="CHEBI:18420"/>
    </cofactor>
</comment>
<comment type="pathway">
    <text evidence="1">Cofactor biosynthesis; adenosylcobalamin biosynthesis; adenosylcobalamin from cob(II)yrinate a,c-diamide: step 7/7.</text>
</comment>
<comment type="subcellular location">
    <subcellularLocation>
        <location evidence="1">Cell membrane</location>
        <topology evidence="1">Multi-pass membrane protein</topology>
    </subcellularLocation>
</comment>
<comment type="similarity">
    <text evidence="1">Belongs to the CobS family.</text>
</comment>